<gene>
    <name evidence="1" type="primary">ndhH</name>
    <name type="ordered locus">PMT_2049</name>
</gene>
<accession>Q7TUL1</accession>
<reference key="1">
    <citation type="journal article" date="2003" name="Nature">
        <title>Genome divergence in two Prochlorococcus ecotypes reflects oceanic niche differentiation.</title>
        <authorList>
            <person name="Rocap G."/>
            <person name="Larimer F.W."/>
            <person name="Lamerdin J.E."/>
            <person name="Malfatti S."/>
            <person name="Chain P."/>
            <person name="Ahlgren N.A."/>
            <person name="Arellano A."/>
            <person name="Coleman M."/>
            <person name="Hauser L."/>
            <person name="Hess W.R."/>
            <person name="Johnson Z.I."/>
            <person name="Land M.L."/>
            <person name="Lindell D."/>
            <person name="Post A.F."/>
            <person name="Regala W."/>
            <person name="Shah M."/>
            <person name="Shaw S.L."/>
            <person name="Steglich C."/>
            <person name="Sullivan M.B."/>
            <person name="Ting C.S."/>
            <person name="Tolonen A."/>
            <person name="Webb E.A."/>
            <person name="Zinser E.R."/>
            <person name="Chisholm S.W."/>
        </authorList>
    </citation>
    <scope>NUCLEOTIDE SEQUENCE [LARGE SCALE GENOMIC DNA]</scope>
    <source>
        <strain>MIT 9313</strain>
    </source>
</reference>
<evidence type="ECO:0000255" key="1">
    <source>
        <dbReference type="HAMAP-Rule" id="MF_01358"/>
    </source>
</evidence>
<proteinExistence type="inferred from homology"/>
<dbReference type="EC" id="7.1.1.-" evidence="1"/>
<dbReference type="EMBL" id="BX548175">
    <property type="protein sequence ID" value="CAE22223.1"/>
    <property type="molecule type" value="Genomic_DNA"/>
</dbReference>
<dbReference type="RefSeq" id="WP_011131414.1">
    <property type="nucleotide sequence ID" value="NC_005071.1"/>
</dbReference>
<dbReference type="SMR" id="Q7TUL1"/>
<dbReference type="KEGG" id="pmt:PMT_2049"/>
<dbReference type="eggNOG" id="COG0649">
    <property type="taxonomic scope" value="Bacteria"/>
</dbReference>
<dbReference type="HOGENOM" id="CLU_015134_1_2_3"/>
<dbReference type="OrthoDB" id="9801496at2"/>
<dbReference type="Proteomes" id="UP000001423">
    <property type="component" value="Chromosome"/>
</dbReference>
<dbReference type="GO" id="GO:0031676">
    <property type="term" value="C:plasma membrane-derived thylakoid membrane"/>
    <property type="evidence" value="ECO:0007669"/>
    <property type="project" value="UniProtKB-SubCell"/>
</dbReference>
<dbReference type="GO" id="GO:0051287">
    <property type="term" value="F:NAD binding"/>
    <property type="evidence" value="ECO:0007669"/>
    <property type="project" value="InterPro"/>
</dbReference>
<dbReference type="GO" id="GO:0016655">
    <property type="term" value="F:oxidoreductase activity, acting on NAD(P)H, quinone or similar compound as acceptor"/>
    <property type="evidence" value="ECO:0007669"/>
    <property type="project" value="UniProtKB-UniRule"/>
</dbReference>
<dbReference type="GO" id="GO:0048038">
    <property type="term" value="F:quinone binding"/>
    <property type="evidence" value="ECO:0007669"/>
    <property type="project" value="UniProtKB-KW"/>
</dbReference>
<dbReference type="GO" id="GO:0019684">
    <property type="term" value="P:photosynthesis, light reaction"/>
    <property type="evidence" value="ECO:0007669"/>
    <property type="project" value="UniProtKB-UniRule"/>
</dbReference>
<dbReference type="Gene3D" id="1.10.645.10">
    <property type="entry name" value="Cytochrome-c3 Hydrogenase, chain B"/>
    <property type="match status" value="1"/>
</dbReference>
<dbReference type="HAMAP" id="MF_01358">
    <property type="entry name" value="NDH1_NuoD"/>
    <property type="match status" value="1"/>
</dbReference>
<dbReference type="InterPro" id="IPR001135">
    <property type="entry name" value="NADH_Q_OxRdtase_suD"/>
</dbReference>
<dbReference type="InterPro" id="IPR014029">
    <property type="entry name" value="NADH_UbQ_OxRdtase_49kDa_CS"/>
</dbReference>
<dbReference type="InterPro" id="IPR022885">
    <property type="entry name" value="NDH1_su_D/H"/>
</dbReference>
<dbReference type="InterPro" id="IPR029014">
    <property type="entry name" value="NiFe-Hase_large"/>
</dbReference>
<dbReference type="NCBIfam" id="NF004739">
    <property type="entry name" value="PRK06075.1"/>
    <property type="match status" value="1"/>
</dbReference>
<dbReference type="NCBIfam" id="NF005649">
    <property type="entry name" value="PRK07415.1"/>
    <property type="match status" value="1"/>
</dbReference>
<dbReference type="PANTHER" id="PTHR11993:SF10">
    <property type="entry name" value="NADH DEHYDROGENASE [UBIQUINONE] IRON-SULFUR PROTEIN 2, MITOCHONDRIAL"/>
    <property type="match status" value="1"/>
</dbReference>
<dbReference type="PANTHER" id="PTHR11993">
    <property type="entry name" value="NADH-UBIQUINONE OXIDOREDUCTASE 49 KDA SUBUNIT"/>
    <property type="match status" value="1"/>
</dbReference>
<dbReference type="Pfam" id="PF00346">
    <property type="entry name" value="Complex1_49kDa"/>
    <property type="match status" value="1"/>
</dbReference>
<dbReference type="SUPFAM" id="SSF56762">
    <property type="entry name" value="HydB/Nqo4-like"/>
    <property type="match status" value="1"/>
</dbReference>
<dbReference type="PROSITE" id="PS00535">
    <property type="entry name" value="COMPLEX1_49K"/>
    <property type="match status" value="1"/>
</dbReference>
<sequence length="394" mass="45091">MSQLETRTEPMVVNFGPHHPSMHGVLRLVVTLDGEDVVDCEPVIGYLHRGMEKIAENRTSVMFVPYVSRMDYAAGMFYEAIVVNAPERLANISVPKRASYIRVLMLELNRIANHLLWLGPFLADVGAQTPFFYIFREREMIYDLWEAATGQRLINNNYFRIGGVACDLPWGWLEKCQDFCDWFGPKIDEYEKLITNNPIFRRRIEGLGAIGRDEAINWSLSGPMLRASGVPWDLRKVDHYECYDDFDWDVAWEKEGDCYARYRVRIEEMRQSLKILRQACDMIPGGPTENLEAQRMAEGKTSPFMGFDYQYVAKKVAPTFKIPNGELYTRLESGKGEIGVFLQGNNDVTPWRFKIRAADLNNLQILPHILKGAKVADIMAILGSIDVIMGSVDR</sequence>
<protein>
    <recommendedName>
        <fullName evidence="1">NAD(P)H-quinone oxidoreductase subunit H</fullName>
        <ecNumber evidence="1">7.1.1.-</ecNumber>
    </recommendedName>
    <alternativeName>
        <fullName>NAD(P)H dehydrogenase subunit H</fullName>
    </alternativeName>
    <alternativeName>
        <fullName evidence="1">NADH-plastoquinone oxidoreductase subunit H</fullName>
    </alternativeName>
    <alternativeName>
        <fullName evidence="1">NDH-1 subunit H</fullName>
        <shortName evidence="1">NDH-H</shortName>
    </alternativeName>
</protein>
<keyword id="KW-0472">Membrane</keyword>
<keyword id="KW-0520">NAD</keyword>
<keyword id="KW-0521">NADP</keyword>
<keyword id="KW-0618">Plastoquinone</keyword>
<keyword id="KW-0874">Quinone</keyword>
<keyword id="KW-1185">Reference proteome</keyword>
<keyword id="KW-0793">Thylakoid</keyword>
<keyword id="KW-1278">Translocase</keyword>
<keyword id="KW-0813">Transport</keyword>
<organism>
    <name type="scientific">Prochlorococcus marinus (strain MIT 9313)</name>
    <dbReference type="NCBI Taxonomy" id="74547"/>
    <lineage>
        <taxon>Bacteria</taxon>
        <taxon>Bacillati</taxon>
        <taxon>Cyanobacteriota</taxon>
        <taxon>Cyanophyceae</taxon>
        <taxon>Synechococcales</taxon>
        <taxon>Prochlorococcaceae</taxon>
        <taxon>Prochlorococcus</taxon>
    </lineage>
</organism>
<name>NDHH_PROMM</name>
<comment type="function">
    <text evidence="1">NDH-1 shuttles electrons from an unknown electron donor, via FMN and iron-sulfur (Fe-S) centers, to quinones in the respiratory and/or the photosynthetic chain. The immediate electron acceptor for the enzyme in this species is believed to be plastoquinone. Couples the redox reaction to proton translocation, and thus conserves the redox energy in a proton gradient. Cyanobacterial NDH-1 also plays a role in inorganic carbon-concentration.</text>
</comment>
<comment type="catalytic activity">
    <reaction evidence="1">
        <text>a plastoquinone + NADH + (n+1) H(+)(in) = a plastoquinol + NAD(+) + n H(+)(out)</text>
        <dbReference type="Rhea" id="RHEA:42608"/>
        <dbReference type="Rhea" id="RHEA-COMP:9561"/>
        <dbReference type="Rhea" id="RHEA-COMP:9562"/>
        <dbReference type="ChEBI" id="CHEBI:15378"/>
        <dbReference type="ChEBI" id="CHEBI:17757"/>
        <dbReference type="ChEBI" id="CHEBI:57540"/>
        <dbReference type="ChEBI" id="CHEBI:57945"/>
        <dbReference type="ChEBI" id="CHEBI:62192"/>
    </reaction>
</comment>
<comment type="catalytic activity">
    <reaction evidence="1">
        <text>a plastoquinone + NADPH + (n+1) H(+)(in) = a plastoquinol + NADP(+) + n H(+)(out)</text>
        <dbReference type="Rhea" id="RHEA:42612"/>
        <dbReference type="Rhea" id="RHEA-COMP:9561"/>
        <dbReference type="Rhea" id="RHEA-COMP:9562"/>
        <dbReference type="ChEBI" id="CHEBI:15378"/>
        <dbReference type="ChEBI" id="CHEBI:17757"/>
        <dbReference type="ChEBI" id="CHEBI:57783"/>
        <dbReference type="ChEBI" id="CHEBI:58349"/>
        <dbReference type="ChEBI" id="CHEBI:62192"/>
    </reaction>
</comment>
<comment type="subunit">
    <text evidence="1">NDH-1 can be composed of about 15 different subunits; different subcomplexes with different compositions have been identified which probably have different functions.</text>
</comment>
<comment type="subcellular location">
    <subcellularLocation>
        <location evidence="1">Cellular thylakoid membrane</location>
        <topology evidence="1">Peripheral membrane protein</topology>
        <orientation evidence="1">Cytoplasmic side</orientation>
    </subcellularLocation>
</comment>
<comment type="similarity">
    <text evidence="1">Belongs to the complex I 49 kDa subunit family.</text>
</comment>
<feature type="chain" id="PRO_0000371912" description="NAD(P)H-quinone oxidoreductase subunit H">
    <location>
        <begin position="1"/>
        <end position="394"/>
    </location>
</feature>